<keyword id="KW-0007">Acetylation</keyword>
<keyword id="KW-0010">Activator</keyword>
<keyword id="KW-0025">Alternative splicing</keyword>
<keyword id="KW-0131">Cell cycle</keyword>
<keyword id="KW-0156">Chromatin regulator</keyword>
<keyword id="KW-0963">Cytoplasm</keyword>
<keyword id="KW-0378">Hydrolase</keyword>
<keyword id="KW-1017">Isopeptide bond</keyword>
<keyword id="KW-0479">Metal-binding</keyword>
<keyword id="KW-0539">Nucleus</keyword>
<keyword id="KW-0597">Phosphoprotein</keyword>
<keyword id="KW-0645">Protease</keyword>
<keyword id="KW-1267">Proteomics identification</keyword>
<keyword id="KW-1185">Reference proteome</keyword>
<keyword id="KW-0788">Thiol protease</keyword>
<keyword id="KW-0804">Transcription</keyword>
<keyword id="KW-0805">Transcription regulation</keyword>
<keyword id="KW-0832">Ubl conjugation</keyword>
<keyword id="KW-0833">Ubl conjugation pathway</keyword>
<keyword id="KW-0862">Zinc</keyword>
<keyword id="KW-0863">Zinc-finger</keyword>
<gene>
    <name type="primary">USP22</name>
    <name type="synonym">KIAA1063</name>
    <name type="synonym">USP3L</name>
</gene>
<proteinExistence type="evidence at protein level"/>
<sequence>MVSRPEPEGEAMDAELAVAPPGCSHLGSFKVDNWKQNLRAIYQCFVWSGTAEARKRKAKSCICHVCGVHLNRLHSCLYCVFFGCFTKKHIHEHAKAKRHNLAIDLMYGGIYCFLCQDYIYDKDMEIIAKEEQRKAWKMQGVGEKFSTWEPTKRELELLKHNPKRRKITSNCTIGLRGLINLGNTCFMNCIVQALTHTPLLRDFFLSDRHRCEMQSPSSCLVCEMSSLFQEFYSGHRSPHIPYKLLHLVWTHARHLAGYEQQDAHEFLIAALDVLHRHCKGDDNGKKANNPNHCNCIIDQIFTGGLQSDVTCQVCHGVSTTIDPFWDISLDLPGSSTPFWPLSPGSEGNVVNGESHVSGTTTLTDCLRRFTRPEHLGSSAKIKCSGCHSYQESTKQLTMKKLPIVACFHLKRFEHSAKLRRKITTYVSFPLELDMTPFMASSKESRMNGQYQQPTDSLNNDNKYSLFAVVNHQGTLESGHYTSFIRQHKDQWFKCDDAIITKASIKDVLDSEGYLLFYHKQFLEYE</sequence>
<dbReference type="EC" id="3.4.19.12" evidence="9 12 13 14"/>
<dbReference type="EMBL" id="AB028986">
    <property type="protein sequence ID" value="BAA83015.1"/>
    <property type="status" value="ALT_INIT"/>
    <property type="molecule type" value="mRNA"/>
</dbReference>
<dbReference type="EMBL" id="BC007196">
    <property type="protein sequence ID" value="AAH07196.1"/>
    <property type="molecule type" value="mRNA"/>
</dbReference>
<dbReference type="EMBL" id="BC025317">
    <property type="protein sequence ID" value="AAH25317.1"/>
    <property type="status" value="ALT_FRAME"/>
    <property type="molecule type" value="mRNA"/>
</dbReference>
<dbReference type="EMBL" id="BC110499">
    <property type="protein sequence ID" value="AAI10500.1"/>
    <property type="status" value="ALT_FRAME"/>
    <property type="molecule type" value="mRNA"/>
</dbReference>
<dbReference type="EMBL" id="BC126898">
    <property type="protein sequence ID" value="AAI26899.1"/>
    <property type="molecule type" value="mRNA"/>
</dbReference>
<dbReference type="EMBL" id="BX640815">
    <property type="protein sequence ID" value="CAE45893.1"/>
    <property type="molecule type" value="mRNA"/>
</dbReference>
<dbReference type="CCDS" id="CCDS42285.1">
    <molecule id="Q9UPT9-1"/>
</dbReference>
<dbReference type="RefSeq" id="NP_056091.1">
    <molecule id="Q9UPT9-1"/>
    <property type="nucleotide sequence ID" value="NM_015276.2"/>
</dbReference>
<dbReference type="SMR" id="Q9UPT9"/>
<dbReference type="BioGRID" id="116914">
    <property type="interactions" value="163"/>
</dbReference>
<dbReference type="ComplexPortal" id="CPX-6802">
    <property type="entry name" value="SAGA complex, KAT2B variant"/>
</dbReference>
<dbReference type="ComplexPortal" id="CPX-900">
    <property type="entry name" value="SAGA complex, KAT2A variant"/>
</dbReference>
<dbReference type="ComplexPortal" id="CPX-903">
    <property type="entry name" value="TFTC histone acetylation complex"/>
</dbReference>
<dbReference type="CORUM" id="Q9UPT9"/>
<dbReference type="FunCoup" id="Q9UPT9">
    <property type="interactions" value="2396"/>
</dbReference>
<dbReference type="IntAct" id="Q9UPT9">
    <property type="interactions" value="96"/>
</dbReference>
<dbReference type="MINT" id="Q9UPT9"/>
<dbReference type="STRING" id="9606.ENSP00000261497"/>
<dbReference type="ChEMBL" id="CHEMBL5291597"/>
<dbReference type="MEROPS" id="C19.035"/>
<dbReference type="GlyGen" id="Q9UPT9">
    <property type="glycosylation" value="1 site, 1 O-linked glycan (1 site)"/>
</dbReference>
<dbReference type="iPTMnet" id="Q9UPT9"/>
<dbReference type="PhosphoSitePlus" id="Q9UPT9"/>
<dbReference type="BioMuta" id="USP22"/>
<dbReference type="DMDM" id="78103328"/>
<dbReference type="jPOST" id="Q9UPT9"/>
<dbReference type="MassIVE" id="Q9UPT9"/>
<dbReference type="PaxDb" id="9606-ENSP00000261497"/>
<dbReference type="PeptideAtlas" id="Q9UPT9"/>
<dbReference type="ProteomicsDB" id="85443">
    <molecule id="Q9UPT9-1"/>
</dbReference>
<dbReference type="ProteomicsDB" id="85444">
    <molecule id="Q9UPT9-2"/>
</dbReference>
<dbReference type="Pumba" id="Q9UPT9"/>
<dbReference type="Antibodypedia" id="26118">
    <property type="antibodies" value="342 antibodies from 33 providers"/>
</dbReference>
<dbReference type="DNASU" id="23326"/>
<dbReference type="Ensembl" id="ENST00000261497.9">
    <molecule id="Q9UPT9-1"/>
    <property type="protein sequence ID" value="ENSP00000261497.4"/>
    <property type="gene ID" value="ENSG00000124422.12"/>
</dbReference>
<dbReference type="Ensembl" id="ENST00000537526.6">
    <molecule id="Q9UPT9-2"/>
    <property type="protein sequence ID" value="ENSP00000440950.2"/>
    <property type="gene ID" value="ENSG00000124422.12"/>
</dbReference>
<dbReference type="GeneID" id="23326"/>
<dbReference type="KEGG" id="hsa:23326"/>
<dbReference type="MANE-Select" id="ENST00000261497.9">
    <property type="protein sequence ID" value="ENSP00000261497.4"/>
    <property type="RefSeq nucleotide sequence ID" value="NM_015276.2"/>
    <property type="RefSeq protein sequence ID" value="NP_056091.1"/>
</dbReference>
<dbReference type="UCSC" id="uc002gym.4">
    <molecule id="Q9UPT9-1"/>
    <property type="organism name" value="human"/>
</dbReference>
<dbReference type="AGR" id="HGNC:12621"/>
<dbReference type="CTD" id="23326"/>
<dbReference type="DisGeNET" id="23326"/>
<dbReference type="GeneCards" id="USP22"/>
<dbReference type="HGNC" id="HGNC:12621">
    <property type="gene designation" value="USP22"/>
</dbReference>
<dbReference type="HPA" id="ENSG00000124422">
    <property type="expression patterns" value="Low tissue specificity"/>
</dbReference>
<dbReference type="MIM" id="612116">
    <property type="type" value="gene"/>
</dbReference>
<dbReference type="neXtProt" id="NX_Q9UPT9"/>
<dbReference type="OpenTargets" id="ENSG00000124422"/>
<dbReference type="PharmGKB" id="PA37247"/>
<dbReference type="VEuPathDB" id="HostDB:ENSG00000124422"/>
<dbReference type="eggNOG" id="KOG1867">
    <property type="taxonomic scope" value="Eukaryota"/>
</dbReference>
<dbReference type="GeneTree" id="ENSGT00940000156623"/>
<dbReference type="HOGENOM" id="CLU_008279_11_0_1"/>
<dbReference type="InParanoid" id="Q9UPT9"/>
<dbReference type="OMA" id="NVSCNCI"/>
<dbReference type="OrthoDB" id="47475at2759"/>
<dbReference type="PAN-GO" id="Q9UPT9">
    <property type="GO annotations" value="0 GO annotations based on evolutionary models"/>
</dbReference>
<dbReference type="PhylomeDB" id="Q9UPT9"/>
<dbReference type="TreeFam" id="TF323554"/>
<dbReference type="PathwayCommons" id="Q9UPT9"/>
<dbReference type="Reactome" id="R-HSA-3214847">
    <property type="pathway name" value="HATs acetylate histones"/>
</dbReference>
<dbReference type="Reactome" id="R-HSA-5689880">
    <property type="pathway name" value="Ub-specific processing proteases"/>
</dbReference>
<dbReference type="SignaLink" id="Q9UPT9"/>
<dbReference type="SIGNOR" id="Q9UPT9"/>
<dbReference type="BioGRID-ORCS" id="23326">
    <property type="hits" value="53 hits in 1182 CRISPR screens"/>
</dbReference>
<dbReference type="ChiTaRS" id="USP22">
    <property type="organism name" value="human"/>
</dbReference>
<dbReference type="GenomeRNAi" id="23326"/>
<dbReference type="Pharos" id="Q9UPT9">
    <property type="development level" value="Tbio"/>
</dbReference>
<dbReference type="PRO" id="PR:Q9UPT9"/>
<dbReference type="Proteomes" id="UP000005640">
    <property type="component" value="Chromosome 17"/>
</dbReference>
<dbReference type="RNAct" id="Q9UPT9">
    <property type="molecule type" value="protein"/>
</dbReference>
<dbReference type="Bgee" id="ENSG00000124422">
    <property type="expression patterns" value="Expressed in paraflocculus and 206 other cell types or tissues"/>
</dbReference>
<dbReference type="ExpressionAtlas" id="Q9UPT9">
    <property type="expression patterns" value="baseline and differential"/>
</dbReference>
<dbReference type="GO" id="GO:0005737">
    <property type="term" value="C:cytoplasm"/>
    <property type="evidence" value="ECO:0000305"/>
    <property type="project" value="UniProt"/>
</dbReference>
<dbReference type="GO" id="GO:0005654">
    <property type="term" value="C:nucleoplasm"/>
    <property type="evidence" value="ECO:0000304"/>
    <property type="project" value="Reactome"/>
</dbReference>
<dbReference type="GO" id="GO:0005634">
    <property type="term" value="C:nucleus"/>
    <property type="evidence" value="ECO:0000305"/>
    <property type="project" value="UniProt"/>
</dbReference>
<dbReference type="GO" id="GO:0000124">
    <property type="term" value="C:SAGA complex"/>
    <property type="evidence" value="ECO:0000314"/>
    <property type="project" value="UniProtKB"/>
</dbReference>
<dbReference type="GO" id="GO:0033276">
    <property type="term" value="C:transcription factor TFTC complex"/>
    <property type="evidence" value="ECO:0000303"/>
    <property type="project" value="ComplexPortal"/>
</dbReference>
<dbReference type="GO" id="GO:0004843">
    <property type="term" value="F:cysteine-type deubiquitinase activity"/>
    <property type="evidence" value="ECO:0000314"/>
    <property type="project" value="UniProtKB"/>
</dbReference>
<dbReference type="GO" id="GO:0019899">
    <property type="term" value="F:enzyme binding"/>
    <property type="evidence" value="ECO:0000353"/>
    <property type="project" value="UniProtKB"/>
</dbReference>
<dbReference type="GO" id="GO:0140950">
    <property type="term" value="F:histone H2A deubiquitinase activity"/>
    <property type="evidence" value="ECO:0000314"/>
    <property type="project" value="UniProtKB"/>
</dbReference>
<dbReference type="GO" id="GO:0140936">
    <property type="term" value="F:histone H2B deubiquitinase activity"/>
    <property type="evidence" value="ECO:0000314"/>
    <property type="project" value="UniProtKB"/>
</dbReference>
<dbReference type="GO" id="GO:0003713">
    <property type="term" value="F:transcription coactivator activity"/>
    <property type="evidence" value="ECO:0000314"/>
    <property type="project" value="UniProtKB"/>
</dbReference>
<dbReference type="GO" id="GO:0008270">
    <property type="term" value="F:zinc ion binding"/>
    <property type="evidence" value="ECO:0007669"/>
    <property type="project" value="UniProtKB-KW"/>
</dbReference>
<dbReference type="GO" id="GO:0009792">
    <property type="term" value="P:embryo development ending in birth or egg hatching"/>
    <property type="evidence" value="ECO:0000303"/>
    <property type="project" value="UniProtKB"/>
</dbReference>
<dbReference type="GO" id="GO:0000086">
    <property type="term" value="P:G2/M transition of mitotic cell cycle"/>
    <property type="evidence" value="ECO:0000314"/>
    <property type="project" value="UniProt"/>
</dbReference>
<dbReference type="GO" id="GO:0045893">
    <property type="term" value="P:positive regulation of DNA-templated transcription"/>
    <property type="evidence" value="ECO:0000315"/>
    <property type="project" value="UniProtKB"/>
</dbReference>
<dbReference type="GO" id="GO:0045931">
    <property type="term" value="P:positive regulation of mitotic cell cycle"/>
    <property type="evidence" value="ECO:0000315"/>
    <property type="project" value="UniProtKB"/>
</dbReference>
<dbReference type="GO" id="GO:0032481">
    <property type="term" value="P:positive regulation of type I interferon production"/>
    <property type="evidence" value="ECO:0000314"/>
    <property type="project" value="UniProt"/>
</dbReference>
<dbReference type="GO" id="GO:0016579">
    <property type="term" value="P:protein deubiquitination"/>
    <property type="evidence" value="ECO:0000314"/>
    <property type="project" value="UniProtKB"/>
</dbReference>
<dbReference type="GO" id="GO:0006508">
    <property type="term" value="P:proteolysis"/>
    <property type="evidence" value="ECO:0007669"/>
    <property type="project" value="UniProtKB-KW"/>
</dbReference>
<dbReference type="GO" id="GO:0006282">
    <property type="term" value="P:regulation of DNA repair"/>
    <property type="evidence" value="ECO:0000303"/>
    <property type="project" value="ComplexPortal"/>
</dbReference>
<dbReference type="GO" id="GO:0043484">
    <property type="term" value="P:regulation of RNA splicing"/>
    <property type="evidence" value="ECO:0000303"/>
    <property type="project" value="ComplexPortal"/>
</dbReference>
<dbReference type="GO" id="GO:0006357">
    <property type="term" value="P:regulation of transcription by RNA polymerase II"/>
    <property type="evidence" value="ECO:0000314"/>
    <property type="project" value="ComplexPortal"/>
</dbReference>
<dbReference type="CDD" id="cd02660">
    <property type="entry name" value="Peptidase_C19D"/>
    <property type="match status" value="1"/>
</dbReference>
<dbReference type="FunFam" id="3.30.40.10:FF:000141">
    <property type="entry name" value="Ubiquitinyl hydrolase 1"/>
    <property type="match status" value="1"/>
</dbReference>
<dbReference type="FunFam" id="3.90.70.10:FF:000011">
    <property type="entry name" value="Ubiquitinyl hydrolase 1"/>
    <property type="match status" value="1"/>
</dbReference>
<dbReference type="Gene3D" id="3.90.70.10">
    <property type="entry name" value="Cysteine proteinases"/>
    <property type="match status" value="1"/>
</dbReference>
<dbReference type="Gene3D" id="3.30.40.10">
    <property type="entry name" value="Zinc/RING finger domain, C3HC4 (zinc finger)"/>
    <property type="match status" value="1"/>
</dbReference>
<dbReference type="InterPro" id="IPR038765">
    <property type="entry name" value="Papain-like_cys_pep_sf"/>
</dbReference>
<dbReference type="InterPro" id="IPR001394">
    <property type="entry name" value="Peptidase_C19_UCH"/>
</dbReference>
<dbReference type="InterPro" id="IPR050185">
    <property type="entry name" value="Ub_carboxyl-term_hydrolase"/>
</dbReference>
<dbReference type="InterPro" id="IPR018200">
    <property type="entry name" value="USP_CS"/>
</dbReference>
<dbReference type="InterPro" id="IPR028889">
    <property type="entry name" value="USP_dom"/>
</dbReference>
<dbReference type="InterPro" id="IPR013083">
    <property type="entry name" value="Znf_RING/FYVE/PHD"/>
</dbReference>
<dbReference type="InterPro" id="IPR001607">
    <property type="entry name" value="Znf_UBP"/>
</dbReference>
<dbReference type="PANTHER" id="PTHR21646">
    <property type="entry name" value="UBIQUITIN CARBOXYL-TERMINAL HYDROLASE"/>
    <property type="match status" value="1"/>
</dbReference>
<dbReference type="PANTHER" id="PTHR21646:SF33">
    <property type="entry name" value="UBIQUITIN CARBOXYL-TERMINAL HYDROLASE 22"/>
    <property type="match status" value="1"/>
</dbReference>
<dbReference type="Pfam" id="PF00443">
    <property type="entry name" value="UCH"/>
    <property type="match status" value="1"/>
</dbReference>
<dbReference type="Pfam" id="PF02148">
    <property type="entry name" value="zf-UBP"/>
    <property type="match status" value="1"/>
</dbReference>
<dbReference type="SUPFAM" id="SSF54001">
    <property type="entry name" value="Cysteine proteinases"/>
    <property type="match status" value="1"/>
</dbReference>
<dbReference type="SUPFAM" id="SSF57850">
    <property type="entry name" value="RING/U-box"/>
    <property type="match status" value="1"/>
</dbReference>
<dbReference type="PROSITE" id="PS00972">
    <property type="entry name" value="USP_1"/>
    <property type="match status" value="1"/>
</dbReference>
<dbReference type="PROSITE" id="PS00973">
    <property type="entry name" value="USP_2"/>
    <property type="match status" value="1"/>
</dbReference>
<dbReference type="PROSITE" id="PS50235">
    <property type="entry name" value="USP_3"/>
    <property type="match status" value="1"/>
</dbReference>
<dbReference type="PROSITE" id="PS50271">
    <property type="entry name" value="ZF_UBP"/>
    <property type="match status" value="1"/>
</dbReference>
<comment type="function">
    <text evidence="1 6 7 8 9 10 12 13 14 15">Deubiquitinase that plays a role in several cellular processes including transcriptional regulation, cell cycle progression or innate immunity. As part of the transcription regulatory histone acetylation (HAT) complex SAGA, catalyzes the deubiquitination of both histones H2A and H2B, thereby acting as a transcriptional coactivator (PubMed:18206972, PubMed:18206973, PubMed:18469533). Recruited to specific gene promoters by activators such as MYC, where it is required for transcription. Facilitates cell-cycle progression by stabilizing CCNB1 and antagonizing its proteasome-mediated degradation in a cell cycle-specific manner (PubMed:27030811). Modulates cell cycle progression and apoptosis also by antagonizing TP53 transcriptional activation through deacetylase SIRT1 stabilization (PubMed:22542455). Plays multiple roles in immunity and inflammation. Participates in antiviral response by deubiquitinating the importin KPNA2, leading to IRF3 nuclear translocation and subsequent type I interferon production (PubMed:32130408). Acts as a central regulator of type III IFN signaling by negatively regulating STING1 activation and ubiquitination (PubMed:35933402). Inhibits NLRP3 inflammasome activation by promoting NLRP3 degradation through ATG5-dependent autophagy (By similarity). Deubiquitinates CD274 to induce its stabilization and thereby participates in maintenance of immune tolerance to self (PubMed:31399419). Controls necroptotic cell death by regulating RIPK3 phosphorylation and ubiquitination (PubMed:33369872). During bacterial infection, promotes pro-inflammatory response by targeting TRAF6 and removing its 'Lys-48'-linked polyubiquitination (By similarity).</text>
</comment>
<comment type="catalytic activity">
    <reaction evidence="7 9 12 13 14">
        <text>Thiol-dependent hydrolysis of ester, thioester, amide, peptide and isopeptide bonds formed by the C-terminal Gly of ubiquitin (a 76-residue protein attached to proteins as an intracellular targeting signal).</text>
        <dbReference type="EC" id="3.4.19.12"/>
    </reaction>
</comment>
<comment type="subunit">
    <text evidence="1 6 11">Component of some SAGA transcription coactivator-HAT complexes, at least composed of ATXN7, ATXN7L3, ENY2, GCN5L2, SUPT3H, TAF10, TRRAP and USP22. Within the SAGA complex, ATXN7L3, ENY2 and USP22 form a subcomplex required for histone deubiquitination (PubMed:18206972, PubMed:27601583). Interacts directly with ATXN7L3; leading to its recruitment to the SAGA complex (PubMed:18206972). Interacts with ATXN7L3 and weakly with ATXN7L3B (PubMed:27601583). Interacts with MED1 (By similarity).</text>
</comment>
<comment type="interaction">
    <interactant intactId="EBI-723510">
        <id>Q9UPT9</id>
    </interactant>
    <interactant intactId="EBI-740884">
        <id>Q9NRN7</id>
        <label>AASDHPPT</label>
    </interactant>
    <organismsDiffer>false</organismsDiffer>
    <experiments>7</experiments>
</comment>
<comment type="interaction">
    <interactant intactId="EBI-723510">
        <id>Q9UPT9</id>
    </interactant>
    <interactant intactId="EBI-711404">
        <id>Q96AE4</id>
        <label>FUBP1</label>
    </interactant>
    <organismsDiffer>false</organismsDiffer>
    <experiments>3</experiments>
</comment>
<comment type="interaction">
    <interactant intactId="EBI-723510">
        <id>Q9UPT9</id>
    </interactant>
    <interactant intactId="EBI-716258">
        <id>Q13469</id>
        <label>NFATC2</label>
    </interactant>
    <organismsDiffer>false</organismsDiffer>
    <experiments>2</experiments>
</comment>
<comment type="interaction">
    <interactant intactId="EBI-12074414">
        <id>Q9UPT9-2</id>
    </interactant>
    <interactant intactId="EBI-740884">
        <id>Q9NRN7</id>
        <label>AASDHPPT</label>
    </interactant>
    <organismsDiffer>false</organismsDiffer>
    <experiments>11</experiments>
</comment>
<comment type="interaction">
    <interactant intactId="EBI-12074414">
        <id>Q9UPT9-2</id>
    </interactant>
    <interactant intactId="EBI-949215">
        <id>Q14CW9</id>
        <label>ATXN7L3</label>
    </interactant>
    <organismsDiffer>false</organismsDiffer>
    <experiments>3</experiments>
</comment>
<comment type="interaction">
    <interactant intactId="EBI-12074414">
        <id>Q9UPT9-2</id>
    </interactant>
    <interactant intactId="EBI-2949658">
        <id>O95429</id>
        <label>BAG4</label>
    </interactant>
    <organismsDiffer>false</organismsDiffer>
    <experiments>3</experiments>
</comment>
<comment type="interaction">
    <interactant intactId="EBI-12074414">
        <id>Q9UPT9-2</id>
    </interactant>
    <interactant intactId="EBI-11522433">
        <id>Q5JR59-3</id>
        <label>MTUS2</label>
    </interactant>
    <organismsDiffer>false</organismsDiffer>
    <experiments>3</experiments>
</comment>
<comment type="subcellular location">
    <subcellularLocation>
        <location evidence="13">Nucleus</location>
    </subcellularLocation>
    <subcellularLocation>
        <location evidence="1">Cytoplasm</location>
    </subcellularLocation>
</comment>
<comment type="alternative products">
    <event type="alternative splicing"/>
    <isoform>
        <id>Q9UPT9-1</id>
        <name>1</name>
        <sequence type="displayed"/>
    </isoform>
    <isoform>
        <id>Q9UPT9-2</id>
        <name>2</name>
        <sequence type="described" ref="VSP_036720"/>
    </isoform>
</comment>
<comment type="tissue specificity">
    <text evidence="5">Moderately expressed in various tissues including heart and skeletal muscle, and weakly expressed in lung and liver.</text>
</comment>
<comment type="PTM">
    <text evidence="10">Phosphorylated in G2/M phase, but not in G1 phase by CDK1.</text>
</comment>
<comment type="PTM">
    <text evidence="10">Ubiquitinated and subsequently degraded in a CDC20-dependent manner.</text>
</comment>
<comment type="similarity">
    <text evidence="17">Belongs to the peptidase C19 family. UBP8 subfamily.</text>
</comment>
<comment type="sequence caution" evidence="17">
    <conflict type="frameshift">
        <sequence resource="EMBL-CDS" id="AAH25317"/>
    </conflict>
</comment>
<comment type="sequence caution" evidence="17">
    <conflict type="erroneous initiation">
        <sequence resource="EMBL-CDS" id="BAA83015"/>
    </conflict>
</comment>
<comment type="sequence caution" evidence="17">
    <molecule>Isoform 2</molecule>
    <conflict type="frameshift">
        <sequence resource="EMBL-CDS" id="AAI10500"/>
    </conflict>
</comment>
<protein>
    <recommendedName>
        <fullName>Ubiquitin carboxyl-terminal hydrolase 22</fullName>
        <ecNumber evidence="9 12 13 14">3.4.19.12</ecNumber>
    </recommendedName>
    <alternativeName>
        <fullName>Deubiquitinating enzyme 22</fullName>
    </alternativeName>
    <alternativeName>
        <fullName>Ubiquitin thioesterase 22</fullName>
    </alternativeName>
    <alternativeName>
        <fullName>Ubiquitin-specific-processing protease 22</fullName>
    </alternativeName>
</protein>
<organism>
    <name type="scientific">Homo sapiens</name>
    <name type="common">Human</name>
    <dbReference type="NCBI Taxonomy" id="9606"/>
    <lineage>
        <taxon>Eukaryota</taxon>
        <taxon>Metazoa</taxon>
        <taxon>Chordata</taxon>
        <taxon>Craniata</taxon>
        <taxon>Vertebrata</taxon>
        <taxon>Euteleostomi</taxon>
        <taxon>Mammalia</taxon>
        <taxon>Eutheria</taxon>
        <taxon>Euarchontoglires</taxon>
        <taxon>Primates</taxon>
        <taxon>Haplorrhini</taxon>
        <taxon>Catarrhini</taxon>
        <taxon>Hominidae</taxon>
        <taxon>Homo</taxon>
    </lineage>
</organism>
<name>UBP22_HUMAN</name>
<feature type="chain" id="PRO_0000080650" description="Ubiquitin carboxyl-terminal hydrolase 22">
    <location>
        <begin position="1"/>
        <end position="525"/>
    </location>
</feature>
<feature type="domain" description="USP">
    <location>
        <begin position="176"/>
        <end position="520"/>
    </location>
</feature>
<feature type="zinc finger region" description="UBP-type" evidence="2">
    <location>
        <begin position="21"/>
        <end position="138"/>
    </location>
</feature>
<feature type="active site" description="Nucleophile" evidence="3 4">
    <location>
        <position position="185"/>
    </location>
</feature>
<feature type="active site" description="Proton acceptor" evidence="3 4">
    <location>
        <position position="479"/>
    </location>
</feature>
<feature type="binding site" evidence="2">
    <location>
        <position position="23"/>
    </location>
    <ligand>
        <name>Zn(2+)</name>
        <dbReference type="ChEBI" id="CHEBI:29105"/>
        <label>1</label>
    </ligand>
</feature>
<feature type="binding site" evidence="2">
    <location>
        <position position="25"/>
    </location>
    <ligand>
        <name>Zn(2+)</name>
        <dbReference type="ChEBI" id="CHEBI:29105"/>
        <label>1</label>
    </ligand>
</feature>
<feature type="binding site" evidence="2">
    <location>
        <position position="63"/>
    </location>
    <ligand>
        <name>Zn(2+)</name>
        <dbReference type="ChEBI" id="CHEBI:29105"/>
        <label>2</label>
    </ligand>
</feature>
<feature type="binding site" evidence="2">
    <location>
        <position position="66"/>
    </location>
    <ligand>
        <name>Zn(2+)</name>
        <dbReference type="ChEBI" id="CHEBI:29105"/>
        <label>2</label>
    </ligand>
</feature>
<feature type="binding site" evidence="2">
    <location>
        <position position="76"/>
    </location>
    <ligand>
        <name>Zn(2+)</name>
        <dbReference type="ChEBI" id="CHEBI:29105"/>
        <label>3</label>
    </ligand>
</feature>
<feature type="binding site" evidence="2">
    <location>
        <position position="79"/>
    </location>
    <ligand>
        <name>Zn(2+)</name>
        <dbReference type="ChEBI" id="CHEBI:29105"/>
        <label>3</label>
    </ligand>
</feature>
<feature type="binding site" evidence="2">
    <location>
        <position position="84"/>
    </location>
    <ligand>
        <name>Zn(2+)</name>
        <dbReference type="ChEBI" id="CHEBI:29105"/>
        <label>2</label>
    </ligand>
</feature>
<feature type="binding site" evidence="2">
    <location>
        <position position="89"/>
    </location>
    <ligand>
        <name>Zn(2+)</name>
        <dbReference type="ChEBI" id="CHEBI:29105"/>
        <label>2</label>
    </ligand>
</feature>
<feature type="binding site" evidence="2">
    <location>
        <position position="93"/>
    </location>
    <ligand>
        <name>Zn(2+)</name>
        <dbReference type="ChEBI" id="CHEBI:29105"/>
        <label>3</label>
    </ligand>
</feature>
<feature type="binding site" evidence="2">
    <location>
        <position position="99"/>
    </location>
    <ligand>
        <name>Zn(2+)</name>
        <dbReference type="ChEBI" id="CHEBI:29105"/>
        <label>3</label>
    </ligand>
</feature>
<feature type="binding site" evidence="2">
    <location>
        <position position="112"/>
    </location>
    <ligand>
        <name>Zn(2+)</name>
        <dbReference type="ChEBI" id="CHEBI:29105"/>
        <label>1</label>
    </ligand>
</feature>
<feature type="binding site" evidence="2">
    <location>
        <position position="115"/>
    </location>
    <ligand>
        <name>Zn(2+)</name>
        <dbReference type="ChEBI" id="CHEBI:29105"/>
        <label>1</label>
    </ligand>
</feature>
<feature type="modified residue" description="N6-acetyllysine" evidence="18">
    <location>
        <position position="129"/>
    </location>
</feature>
<feature type="modified residue" description="Phosphothreonine; by CDK1" evidence="10">
    <location>
        <position position="147"/>
    </location>
</feature>
<feature type="modified residue" description="Phosphoserine; by CDK1" evidence="10">
    <location>
        <position position="237"/>
    </location>
</feature>
<feature type="splice variant" id="VSP_036720" description="In isoform 2." evidence="16">
    <original>MVSRPEPEGEAMDAELAVAPPGCSHLGSFKVDNWKQNLRAIYQCFVWSGTAEARKRK</original>
    <variation>MAPGWPSLSAGSRQEAPQLAAGGSAYQAVGRQFQPRATALQGPSQ</variation>
    <location>
        <begin position="1"/>
        <end position="57"/>
    </location>
</feature>
<feature type="mutagenesis site" description="Complete loss of CDK1-mediated phosphorylation; when associated with A-237." evidence="10">
    <original>T</original>
    <variation>A</variation>
    <location>
        <position position="147"/>
    </location>
</feature>
<feature type="mutagenesis site" description="Complete loss of nuclear localization; when associated with A-165." evidence="13">
    <original>R</original>
    <variation>A</variation>
    <location>
        <position position="164"/>
    </location>
</feature>
<feature type="mutagenesis site" description="Complete loss of nuclear localization; when associated with A-164." evidence="13">
    <original>R</original>
    <variation>A</variation>
    <location>
        <position position="165"/>
    </location>
</feature>
<feature type="mutagenesis site" description="Complete loss of deubiquitinase activity." evidence="9 12 13 14">
    <original>C</original>
    <variation>S</variation>
    <location>
        <position position="185"/>
    </location>
</feature>
<feature type="mutagenesis site" description="Complete loss of CDK1-mediated phosphorylation; when associated with A-147." evidence="10">
    <original>S</original>
    <variation>A</variation>
    <location>
        <position position="237"/>
    </location>
</feature>
<feature type="mutagenesis site" description="Impairs its function as a positive modulator of androgen receptor transactivation; when associated with A-479." evidence="6">
    <original>H</original>
    <variation>A</variation>
    <location>
        <position position="471"/>
    </location>
</feature>
<feature type="mutagenesis site" description="Impairs its function as a positive modulator of androgen receptor transactivation; when associated with A-471." evidence="6">
    <original>H</original>
    <variation>A</variation>
    <location>
        <position position="479"/>
    </location>
</feature>
<feature type="sequence conflict" description="In Ref. 2; AAI26899." evidence="17" ref="2">
    <original>F</original>
    <variation>L</variation>
    <location>
        <position position="85"/>
    </location>
</feature>
<feature type="sequence conflict" description="In Ref. 3; CAE45893." evidence="17" ref="3">
    <original>K</original>
    <variation>T</variation>
    <location>
        <position position="380"/>
    </location>
</feature>
<feature type="sequence conflict" description="In Ref. 2; AAH25317." evidence="17" ref="2">
    <original>D</original>
    <variation>V</variation>
    <location>
        <position position="496"/>
    </location>
</feature>
<reference key="1">
    <citation type="journal article" date="1999" name="DNA Res.">
        <title>Prediction of the coding sequences of unidentified human genes. XIV. The complete sequences of 100 new cDNA clones from brain which code for large proteins in vitro.</title>
        <authorList>
            <person name="Kikuno R."/>
            <person name="Nagase T."/>
            <person name="Ishikawa K."/>
            <person name="Hirosawa M."/>
            <person name="Miyajima N."/>
            <person name="Tanaka A."/>
            <person name="Kotani H."/>
            <person name="Nomura N."/>
            <person name="Ohara O."/>
        </authorList>
    </citation>
    <scope>NUCLEOTIDE SEQUENCE [LARGE SCALE MRNA] (ISOFORM 1)</scope>
    <source>
        <tissue>Brain</tissue>
    </source>
</reference>
<reference key="2">
    <citation type="journal article" date="2004" name="Genome Res.">
        <title>The status, quality, and expansion of the NIH full-length cDNA project: the Mammalian Gene Collection (MGC).</title>
        <authorList>
            <consortium name="The MGC Project Team"/>
        </authorList>
    </citation>
    <scope>NUCLEOTIDE SEQUENCE [LARGE SCALE MRNA] (ISOFORM 2)</scope>
    <source>
        <tissue>Uterus</tissue>
    </source>
</reference>
<reference key="3">
    <citation type="journal article" date="2007" name="BMC Genomics">
        <title>The full-ORF clone resource of the German cDNA consortium.</title>
        <authorList>
            <person name="Bechtel S."/>
            <person name="Rosenfelder H."/>
            <person name="Duda A."/>
            <person name="Schmidt C.P."/>
            <person name="Ernst U."/>
            <person name="Wellenreuther R."/>
            <person name="Mehrle A."/>
            <person name="Schuster C."/>
            <person name="Bahr A."/>
            <person name="Bloecker H."/>
            <person name="Heubner D."/>
            <person name="Hoerlein A."/>
            <person name="Michel G."/>
            <person name="Wedler H."/>
            <person name="Koehrer K."/>
            <person name="Ottenwaelder B."/>
            <person name="Poustka A."/>
            <person name="Wiemann S."/>
            <person name="Schupp I."/>
        </authorList>
    </citation>
    <scope>NUCLEOTIDE SEQUENCE [LARGE SCALE MRNA] OF 73-525</scope>
    <source>
        <tissue>Colon endothelium</tissue>
    </source>
</reference>
<reference key="4">
    <citation type="journal article" date="2006" name="Gene Expr. Patterns">
        <title>The expression patterns of deubiquitinating enzymes, USP22 and Usp22.</title>
        <authorList>
            <person name="Lee H.-J."/>
            <person name="Kim M.-S."/>
            <person name="Shin J.-M."/>
            <person name="Park T.-J."/>
            <person name="Chung H.-M."/>
            <person name="Baek K.-H."/>
        </authorList>
    </citation>
    <scope>TISSUE SPECIFICITY</scope>
</reference>
<reference key="5">
    <citation type="journal article" date="2008" name="Mol. Cell">
        <title>A TFTC/STAGA module mediates histone H2A and H2B deubiquitination, coactivates nuclear receptors, and counteracts heterochromatin silencing.</title>
        <authorList>
            <person name="Zhao Y."/>
            <person name="Lang G."/>
            <person name="Ito S."/>
            <person name="Bonnet J."/>
            <person name="Metzger E."/>
            <person name="Sawatsubashi S."/>
            <person name="Suzuki E."/>
            <person name="Le Guezennec X."/>
            <person name="Stunnenberg H.G."/>
            <person name="Krasnov A."/>
            <person name="Georgieva S.G."/>
            <person name="Schuele R."/>
            <person name="Takeyama K."/>
            <person name="Kato S."/>
            <person name="Tora L."/>
            <person name="Devys D."/>
        </authorList>
    </citation>
    <scope>FUNCTION IN HISTONE DEUBIQUITINATION</scope>
    <scope>IDENTIFICATION BY MASS SPECTROMETRY</scope>
    <scope>IDENTIFICATION IN THE SAGA COMPLEX</scope>
    <scope>MUTAGENESIS OF HIS-471 AND HIS-479</scope>
</reference>
<reference key="6">
    <citation type="journal article" date="2008" name="Mol. Cell">
        <title>The putative cancer stem cell marker USP22 is a subunit of the human SAGA complex required for activated transcription and cell-cycle progression.</title>
        <authorList>
            <person name="Zhang X.-Y."/>
            <person name="Varthi M."/>
            <person name="Sykes S.M."/>
            <person name="Phillips C."/>
            <person name="Warzecha C."/>
            <person name="Zhu W."/>
            <person name="Wyce A."/>
            <person name="Thorne A.W."/>
            <person name="Berger S.L."/>
            <person name="McMahon S.B."/>
        </authorList>
    </citation>
    <scope>FUNCTION IN HISTONE H2A DEUBIQUITINATION</scope>
    <scope>CATALYTIC ACTIVITY</scope>
</reference>
<reference key="7">
    <citation type="journal article" date="2008" name="Cell Cycle">
        <title>USP22, an hSAGA subunit and potential cancer stem cell marker, reverses the polycomb-catalyzed ubiquitylation of histone H2A.</title>
        <authorList>
            <person name="Zhang X.-Y."/>
            <person name="Pfeiffer H.K."/>
            <person name="Thorne A.W."/>
            <person name="McMahon S.B."/>
        </authorList>
    </citation>
    <scope>FUNCTION IN HISTONE H2B DEUBIQUITINATION</scope>
</reference>
<reference key="8">
    <citation type="journal article" date="2009" name="Science">
        <title>Lysine acetylation targets protein complexes and co-regulates major cellular functions.</title>
        <authorList>
            <person name="Choudhary C."/>
            <person name="Kumar C."/>
            <person name="Gnad F."/>
            <person name="Nielsen M.L."/>
            <person name="Rehman M."/>
            <person name="Walther T.C."/>
            <person name="Olsen J.V."/>
            <person name="Mann M."/>
        </authorList>
    </citation>
    <scope>ACETYLATION [LARGE SCALE ANALYSIS] AT LYS-129</scope>
    <scope>IDENTIFICATION BY MASS SPECTROMETRY [LARGE SCALE ANALYSIS]</scope>
</reference>
<reference key="9">
    <citation type="journal article" date="2012" name="Proc. Natl. Acad. Sci. U.S.A.">
        <title>N-terminal acetylome analyses and functional insights of the N-terminal acetyltransferase NatB.</title>
        <authorList>
            <person name="Van Damme P."/>
            <person name="Lasa M."/>
            <person name="Polevoda B."/>
            <person name="Gazquez C."/>
            <person name="Elosegui-Artola A."/>
            <person name="Kim D.S."/>
            <person name="De Juan-Pardo E."/>
            <person name="Demeyer K."/>
            <person name="Hole K."/>
            <person name="Larrea E."/>
            <person name="Timmerman E."/>
            <person name="Prieto J."/>
            <person name="Arnesen T."/>
            <person name="Sherman F."/>
            <person name="Gevaert K."/>
            <person name="Aldabe R."/>
        </authorList>
    </citation>
    <scope>IDENTIFICATION BY MASS SPECTROMETRY [LARGE SCALE ANALYSIS]</scope>
</reference>
<reference key="10">
    <citation type="journal article" date="2012" name="Mol. Cell">
        <title>USP22 antagonizes p53 transcriptional activation by deubiquitinating Sirt1 to suppress cell apoptosis and is required for mouse embryonic development.</title>
        <authorList>
            <person name="Lin Z."/>
            <person name="Yang H."/>
            <person name="Kong Q."/>
            <person name="Li J."/>
            <person name="Lee S.M."/>
            <person name="Gao B."/>
            <person name="Dong H."/>
            <person name="Wei J."/>
            <person name="Song J."/>
            <person name="Zhang D.D."/>
            <person name="Fang D."/>
        </authorList>
    </citation>
    <scope>FUNCTION</scope>
    <scope>CATALYTIC ACTIVITY</scope>
    <scope>MUTAGENESIS OF CYS-185</scope>
</reference>
<reference key="11">
    <citation type="journal article" date="2015" name="Cell Discov.">
        <title>Ubiquitin-specific protease 22 is a deubiquitinase of CCNB1.</title>
        <authorList>
            <person name="Lin Z."/>
            <person name="Tan C."/>
            <person name="Qiu Q."/>
            <person name="Kong S."/>
            <person name="Yang H."/>
            <person name="Zhao F."/>
            <person name="Liu Z."/>
            <person name="Li J."/>
            <person name="Kong Q."/>
            <person name="Gao B."/>
            <person name="Barrett T."/>
            <person name="Yang G.Y."/>
            <person name="Zhang J."/>
            <person name="Fang D."/>
        </authorList>
    </citation>
    <scope>FUNCTION</scope>
    <scope>PHOSPHORYLATION AT THR-147 AND SER-237</scope>
    <scope>MUTAGENESIS OF THR-147 AND SER-237</scope>
    <scope>INTERACTION WITH CDC20</scope>
    <scope>UBIQUITINATION</scope>
</reference>
<reference key="12">
    <citation type="journal article" date="2016" name="Mol. Cell. Biol.">
        <title>Cytoplasmic ATXN7L3B interferes with nuclear functions of the SAGA deubiquitinase module.</title>
        <authorList>
            <person name="Li W."/>
            <person name="Atanassov B.S."/>
            <person name="Lan X."/>
            <person name="Mohan R.D."/>
            <person name="Swanson S.K."/>
            <person name="Farria A.T."/>
            <person name="Florens L."/>
            <person name="Washburn M.P."/>
            <person name="Workman J.L."/>
            <person name="Dent S.Y."/>
        </authorList>
    </citation>
    <scope>IDENTIFICATION IN THE SAGA COMPLEX</scope>
    <scope>INTERACTION WITH ATXN7L3 AND ATXN7L3B</scope>
</reference>
<reference key="13">
    <citation type="journal article" date="2019" name="Cancer Immunol. Res.">
        <title>USP22 Deubiquitinates CD274 to Suppress Anticancer Immunity.</title>
        <authorList>
            <person name="Huang X."/>
            <person name="Zhang Q."/>
            <person name="Lou Y."/>
            <person name="Wang J."/>
            <person name="Zhao X."/>
            <person name="Wang L."/>
            <person name="Zhang X."/>
            <person name="Li S."/>
            <person name="Zhao Y."/>
            <person name="Chen Q."/>
            <person name="Liang T."/>
            <person name="Bai X."/>
        </authorList>
    </citation>
    <scope>FUNCTION</scope>
    <scope>CATALYTIC ACTIVITY</scope>
    <scope>MUTAGENESIS OF CYS-185</scope>
</reference>
<reference key="14">
    <citation type="journal article" date="2020" name="J. Exp. Med.">
        <title>USP22 promotes IRF3 nuclear translocation and antiviral responses by deubiquitinating the importin protein KPNA2.</title>
        <authorList>
            <person name="Cai Z."/>
            <person name="Zhang M.X."/>
            <person name="Tang Z."/>
            <person name="Zhang Q."/>
            <person name="Ye J."/>
            <person name="Xiong T.C."/>
            <person name="Zhang Z.D."/>
            <person name="Zhong B."/>
        </authorList>
    </citation>
    <scope>FUNCTION</scope>
    <scope>CATALYTIC ACTIVITY</scope>
    <scope>MUTAGENESIS OF ARG-164; ARG-165 AND CYS-185</scope>
    <scope>SUBCELLULAR LOCATION</scope>
</reference>
<reference key="15">
    <citation type="journal article" date="2021" name="EMBO Rep.">
        <title>USP22 controls necroptosis by regulating receptor-interacting protein kinase 3 ubiquitination.</title>
        <authorList>
            <person name="Roedig J."/>
            <person name="Kowald L."/>
            <person name="Juretschke T."/>
            <person name="Karlowitz R."/>
            <person name="Ahangarian Abhari B."/>
            <person name="Roedig H."/>
            <person name="Fulda S."/>
            <person name="Beli P."/>
            <person name="van Wijk S.J."/>
        </authorList>
    </citation>
    <scope>FUNCTION</scope>
    <scope>MUTAGENESIS OF CYS-185</scope>
    <scope>CATALYTIC ACTIVITY</scope>
</reference>
<reference key="16">
    <citation type="journal article" date="2022" name="Cell Death Dis.">
        <title>USP22 controls type III interferon signaling and SARS-CoV-2 infection through activation of STING.</title>
        <authorList>
            <person name="Karlowitz R."/>
            <person name="Stanifer M.L."/>
            <person name="Roedig J."/>
            <person name="Andrieux G."/>
            <person name="Bojkova D."/>
            <person name="Bechtel M."/>
            <person name="Smith S."/>
            <person name="Kowald L."/>
            <person name="Schubert R."/>
            <person name="Boerries M."/>
            <person name="Cinatl J. Jr."/>
            <person name="Boulant S."/>
            <person name="van Wijk S.J.L."/>
        </authorList>
    </citation>
    <scope>FUNCTION</scope>
</reference>
<accession>Q9UPT9</accession>
<accession>A0JNS3</accession>
<accession>Q2NLE2</accession>
<accession>Q6MZY4</accession>
<accession>Q8TBS8</accession>
<accession>Q96IW5</accession>
<evidence type="ECO:0000250" key="1">
    <source>
        <dbReference type="UniProtKB" id="Q5DU02"/>
    </source>
</evidence>
<evidence type="ECO:0000255" key="2">
    <source>
        <dbReference type="PROSITE-ProRule" id="PRU00502"/>
    </source>
</evidence>
<evidence type="ECO:0000255" key="3">
    <source>
        <dbReference type="PROSITE-ProRule" id="PRU10092"/>
    </source>
</evidence>
<evidence type="ECO:0000255" key="4">
    <source>
        <dbReference type="PROSITE-ProRule" id="PRU10093"/>
    </source>
</evidence>
<evidence type="ECO:0000269" key="5">
    <source>
    </source>
</evidence>
<evidence type="ECO:0000269" key="6">
    <source>
    </source>
</evidence>
<evidence type="ECO:0000269" key="7">
    <source>
    </source>
</evidence>
<evidence type="ECO:0000269" key="8">
    <source>
    </source>
</evidence>
<evidence type="ECO:0000269" key="9">
    <source>
    </source>
</evidence>
<evidence type="ECO:0000269" key="10">
    <source>
    </source>
</evidence>
<evidence type="ECO:0000269" key="11">
    <source>
    </source>
</evidence>
<evidence type="ECO:0000269" key="12">
    <source>
    </source>
</evidence>
<evidence type="ECO:0000269" key="13">
    <source>
    </source>
</evidence>
<evidence type="ECO:0000269" key="14">
    <source>
    </source>
</evidence>
<evidence type="ECO:0000269" key="15">
    <source>
    </source>
</evidence>
<evidence type="ECO:0000303" key="16">
    <source>
    </source>
</evidence>
<evidence type="ECO:0000305" key="17"/>
<evidence type="ECO:0007744" key="18">
    <source>
    </source>
</evidence>